<feature type="chain" id="PRO_0000435336" description="Suppressor of spindle checkpoint defect 1" evidence="6">
    <location>
        <begin position="1"/>
        <end position="798"/>
    </location>
</feature>
<feature type="coiled-coil region" evidence="2">
    <location>
        <begin position="339"/>
        <end position="359"/>
    </location>
</feature>
<feature type="mutagenesis site" description="In h1960; results in decreased brood size and a high incidence of males (Him) phenotype." evidence="3">
    <original>G</original>
    <variation>D</variation>
    <location>
        <position position="27"/>
    </location>
</feature>
<feature type="mutagenesis site" description="In av9gf; gain of function mutation." evidence="4">
    <original>E</original>
    <variation>K</variation>
    <location>
        <position position="693"/>
    </location>
</feature>
<sequence>MPPKKAQTRRIVSLDSLFGHTLLNITGEPVTPTKIAIFQLIRTLFHAHFGVGAVPSLKPFDKDEKTRVFTVLYGLIIMKSEISYDDFRCIVRILNDGLGRSIYYRFVTSMEKLAHGEDQIEMLFEDAFYTAKRPNHEKVLKREDSWLDELTFMNSNSFLYIWIKRVMMQYTRTSQNGTFEIAEKFQKWIISGTLEIISHPILSGINRALPTEIDCSIRARHWCAAQLRLVQLCPTKAMSYFQILDWCDTIHRRHHDVVDVHLLRAAIFVQLKNSSDAVKSLKQFFDMSMLEITENSKHALETLKLMSPSQVALRFGPILQGRVHRIFGERQIASALFAESIQQSQVNVDDMCNRIANMEVTINSIYMSGPLLQRLSGETFAAGKKEEESVENERRVQQNSVHAAVDLNVPTLRSLQKNFREDYELHAFLVSMCKFLLCIQDMMDGKFFKHNSTADYVSVGFHRLRLLLDMNNKGFVLQAFANAIMTSGLIQSGMYHQAKRVAETMIVSNCDAPNSPILETESHAVAGVNLVYSLAAVGDYEKAQKTIDILKNRFPENINWMAARHVDICSKIVNFERNFLLNKYSECSRHLAGLETSAPLEFVLRKSLLLAATGKLAEAVLLLGTYECGDVRGSMRIHMQMATIHTAYGQFETAEIQIQEAGKVAVNAHFLDANLLVVRRVGSLMLGRFMAREAYQVLHALSAKIEHFGSFIEKAIYHVSMARCLRLMHKDPRVHLKQCKAQIIGNKWPAMEKLLLTELTILHHSGGLYPDEQKEMKAKERFGKIEADFPGPCTWMFI</sequence>
<name>SUCH1_CAEEL</name>
<proteinExistence type="evidence at protein level"/>
<evidence type="ECO:0000250" key="1">
    <source>
        <dbReference type="UniProtKB" id="Q9UJX4"/>
    </source>
</evidence>
<evidence type="ECO:0000255" key="2"/>
<evidence type="ECO:0000269" key="3">
    <source>
    </source>
</evidence>
<evidence type="ECO:0000269" key="4">
    <source>
    </source>
</evidence>
<evidence type="ECO:0000269" key="5">
    <source>
    </source>
</evidence>
<evidence type="ECO:0000305" key="6"/>
<evidence type="ECO:0000312" key="7">
    <source>
        <dbReference type="Proteomes" id="UP000001940"/>
    </source>
</evidence>
<evidence type="ECO:0000312" key="8">
    <source>
        <dbReference type="WormBase" id="Y66D12A.17"/>
    </source>
</evidence>
<gene>
    <name evidence="8" type="primary">such-1</name>
    <name evidence="8" type="synonym">som-2</name>
    <name evidence="8" type="ORF">Y66D12A.17</name>
</gene>
<dbReference type="EMBL" id="AL161712">
    <property type="protein sequence ID" value="CAC70137.2"/>
    <property type="molecule type" value="Genomic_DNA"/>
</dbReference>
<dbReference type="RefSeq" id="NP_499485.2">
    <property type="nucleotide sequence ID" value="NM_067084.7"/>
</dbReference>
<dbReference type="ComplexPortal" id="CPX-3382">
    <property type="entry name" value="Anaphase-promoting complex"/>
</dbReference>
<dbReference type="FunCoup" id="Q95Q00">
    <property type="interactions" value="1405"/>
</dbReference>
<dbReference type="STRING" id="6239.Y66D12A.17.1"/>
<dbReference type="PaxDb" id="6239-Y66D12A.17"/>
<dbReference type="PeptideAtlas" id="Q95Q00"/>
<dbReference type="EnsemblMetazoa" id="Y66D12A.17.1">
    <property type="protein sequence ID" value="Y66D12A.17.1"/>
    <property type="gene ID" value="WBGene00013443"/>
</dbReference>
<dbReference type="GeneID" id="176583"/>
<dbReference type="KEGG" id="cel:CELE_Y66D12A.17"/>
<dbReference type="UCSC" id="Y66D12A.17">
    <property type="organism name" value="c. elegans"/>
</dbReference>
<dbReference type="AGR" id="WB:WBGene00013443"/>
<dbReference type="CTD" id="176583"/>
<dbReference type="WormBase" id="Y66D12A.17">
    <property type="protein sequence ID" value="CE41524"/>
    <property type="gene ID" value="WBGene00013443"/>
    <property type="gene designation" value="such-1"/>
</dbReference>
<dbReference type="eggNOG" id="ENOG502S8D6">
    <property type="taxonomic scope" value="Eukaryota"/>
</dbReference>
<dbReference type="GeneTree" id="ENSGT00390000018674"/>
<dbReference type="HOGENOM" id="CLU_351691_0_0_1"/>
<dbReference type="InParanoid" id="Q95Q00"/>
<dbReference type="OMA" id="FYQPRKL"/>
<dbReference type="OrthoDB" id="5773922at2759"/>
<dbReference type="PhylomeDB" id="Q95Q00"/>
<dbReference type="UniPathway" id="UPA00143"/>
<dbReference type="PRO" id="PR:Q95Q00"/>
<dbReference type="Proteomes" id="UP000001940">
    <property type="component" value="Chromosome III"/>
</dbReference>
<dbReference type="Bgee" id="WBGene00013443">
    <property type="expression patterns" value="Expressed in germ line (C elegans) and 3 other cell types or tissues"/>
</dbReference>
<dbReference type="GO" id="GO:0005680">
    <property type="term" value="C:anaphase-promoting complex"/>
    <property type="evidence" value="ECO:0000318"/>
    <property type="project" value="GO_Central"/>
</dbReference>
<dbReference type="GO" id="GO:0031145">
    <property type="term" value="P:anaphase-promoting complex-dependent catabolic process"/>
    <property type="evidence" value="ECO:0000318"/>
    <property type="project" value="GO_Central"/>
</dbReference>
<dbReference type="GO" id="GO:0051301">
    <property type="term" value="P:cell division"/>
    <property type="evidence" value="ECO:0007669"/>
    <property type="project" value="UniProtKB-KW"/>
</dbReference>
<dbReference type="GO" id="GO:0051321">
    <property type="term" value="P:meiotic cell cycle"/>
    <property type="evidence" value="ECO:0007669"/>
    <property type="project" value="UniProtKB-KW"/>
</dbReference>
<dbReference type="GO" id="GO:0045842">
    <property type="term" value="P:positive regulation of mitotic metaphase/anaphase transition"/>
    <property type="evidence" value="ECO:0000318"/>
    <property type="project" value="GO_Central"/>
</dbReference>
<dbReference type="GO" id="GO:0070979">
    <property type="term" value="P:protein K11-linked ubiquitination"/>
    <property type="evidence" value="ECO:0000318"/>
    <property type="project" value="GO_Central"/>
</dbReference>
<dbReference type="GO" id="GO:0051445">
    <property type="term" value="P:regulation of meiotic cell cycle"/>
    <property type="evidence" value="ECO:0000303"/>
    <property type="project" value="ComplexPortal"/>
</dbReference>
<dbReference type="GO" id="GO:0007346">
    <property type="term" value="P:regulation of mitotic cell cycle"/>
    <property type="evidence" value="ECO:0000303"/>
    <property type="project" value="ComplexPortal"/>
</dbReference>
<dbReference type="InterPro" id="IPR037679">
    <property type="entry name" value="Apc5"/>
</dbReference>
<dbReference type="PANTHER" id="PTHR12830">
    <property type="entry name" value="ANAPHASE-PROMOTING COMPLEX SUBUNIT 5"/>
    <property type="match status" value="1"/>
</dbReference>
<dbReference type="PANTHER" id="PTHR12830:SF10">
    <property type="entry name" value="SUPPRESSOR OF SPINDLE CHECKPOINT DEFECT 1"/>
    <property type="match status" value="1"/>
</dbReference>
<accession>Q95Q00</accession>
<comment type="function">
    <text evidence="1 3 4 5">Probable component of the anaphase promoting complex/cyclosome (APC/C), a cell cycle-regulated E3 ubiquitin ligase that controls progression through mitosis and the G1 phase of the cell cycle (By similarity). The APC/C complex acts by mediating ubiquitination and subsequent degradation of target proteins (By similarity). Required for the metaphase to anaphase transition in meiosis (PubMed:17237515, PubMed:20944012). Plays a role in the segregation of DNA and centrioles during meiosis in male germ cells (PubMed:20944014).</text>
</comment>
<comment type="pathway">
    <text evidence="6">Protein modification; protein ubiquitination.</text>
</comment>
<comment type="subunit">
    <text evidence="6">The APC/C complex is probably composed of at least 12 subunits: apc-2, apc-10, apc-11, cdc-26, emb-1, emb-27, emb-30, mat-1, mat-2, mat-3, such-1 and gfi-3.</text>
</comment>
<comment type="tissue specificity">
    <text evidence="4">Expressed in head neurons, vulval precursor cells and in mature sperm stored in the spermatheca.</text>
</comment>
<comment type="developmental stage">
    <text evidence="4">Expressed in the developing germ line and throughout embryogenesis.</text>
</comment>
<comment type="disruption phenotype">
    <text evidence="4">Double RNAi-mediated knockdown and/or mutagenesis with gfi-3 results in increased embryonic lethality and the production of one-cell arrested embryos.</text>
</comment>
<comment type="similarity">
    <text evidence="6">Belongs to the APC5 family.</text>
</comment>
<protein>
    <recommendedName>
        <fullName evidence="8">Suppressor of spindle checkpoint defect 1</fullName>
    </recommendedName>
</protein>
<keyword id="KW-0131">Cell cycle</keyword>
<keyword id="KW-0132">Cell division</keyword>
<keyword id="KW-0175">Coiled coil</keyword>
<keyword id="KW-0217">Developmental protein</keyword>
<keyword id="KW-0469">Meiosis</keyword>
<keyword id="KW-0498">Mitosis</keyword>
<keyword id="KW-1185">Reference proteome</keyword>
<keyword id="KW-0833">Ubl conjugation pathway</keyword>
<reference evidence="7" key="1">
    <citation type="journal article" date="1998" name="Science">
        <title>Genome sequence of the nematode C. elegans: a platform for investigating biology.</title>
        <authorList>
            <consortium name="The C. elegans sequencing consortium"/>
        </authorList>
    </citation>
    <scope>NUCLEOTIDE SEQUENCE [LARGE SCALE GENOMIC DNA]</scope>
    <source>
        <strain evidence="7">Bristol N2</strain>
    </source>
</reference>
<reference evidence="6" key="2">
    <citation type="journal article" date="2007" name="Genetics">
        <title>Suppressors of spindle checkpoint defect (such) mutants identify new mdf-1/MAD1 interactors in Caenorhabditis elegans.</title>
        <authorList>
            <person name="Tarailo M."/>
            <person name="Kitagawa R."/>
            <person name="Rose A.M."/>
        </authorList>
    </citation>
    <scope>FUNCTION</scope>
    <scope>MUTAGENESIS OF GLY-27</scope>
</reference>
<reference evidence="6" key="3">
    <citation type="journal article" date="2010" name="Genetics">
        <title>Mutual antagonism between the anaphase promoting complex and the spindle assembly checkpoint contributes to mitotic timing in Caenorhabditis elegans.</title>
        <authorList>
            <person name="Bezler A."/>
            <person name="Gonczy P."/>
        </authorList>
    </citation>
    <scope>FUNCTION</scope>
</reference>
<reference evidence="6" key="4">
    <citation type="journal article" date="2010" name="Genetics">
        <title>Functional redundancy of paralogs of an anaphase promoting complex/cyclosome subunit in Caenorhabditis elegans meiosis.</title>
        <authorList>
            <person name="Stein K.K."/>
            <person name="Nesmith J.E."/>
            <person name="Ross B.D."/>
            <person name="Golden A."/>
        </authorList>
    </citation>
    <scope>FUNCTION</scope>
    <scope>TISSUE SPECIFICITY</scope>
    <scope>DEVELOPMENTAL STAGE</scope>
    <scope>DISRUPTION PHENOTYPE</scope>
    <scope>MUTAGENESIS OF GLU-693</scope>
</reference>
<organism evidence="7">
    <name type="scientific">Caenorhabditis elegans</name>
    <dbReference type="NCBI Taxonomy" id="6239"/>
    <lineage>
        <taxon>Eukaryota</taxon>
        <taxon>Metazoa</taxon>
        <taxon>Ecdysozoa</taxon>
        <taxon>Nematoda</taxon>
        <taxon>Chromadorea</taxon>
        <taxon>Rhabditida</taxon>
        <taxon>Rhabditina</taxon>
        <taxon>Rhabditomorpha</taxon>
        <taxon>Rhabditoidea</taxon>
        <taxon>Rhabditidae</taxon>
        <taxon>Peloderinae</taxon>
        <taxon>Caenorhabditis</taxon>
    </lineage>
</organism>